<organism>
    <name type="scientific">Oryza sativa subsp. japonica</name>
    <name type="common">Rice</name>
    <dbReference type="NCBI Taxonomy" id="39947"/>
    <lineage>
        <taxon>Eukaryota</taxon>
        <taxon>Viridiplantae</taxon>
        <taxon>Streptophyta</taxon>
        <taxon>Embryophyta</taxon>
        <taxon>Tracheophyta</taxon>
        <taxon>Spermatophyta</taxon>
        <taxon>Magnoliopsida</taxon>
        <taxon>Liliopsida</taxon>
        <taxon>Poales</taxon>
        <taxon>Poaceae</taxon>
        <taxon>BOP clade</taxon>
        <taxon>Oryzoideae</taxon>
        <taxon>Oryzeae</taxon>
        <taxon>Oryzinae</taxon>
        <taxon>Oryza</taxon>
        <taxon>Oryza sativa</taxon>
    </lineage>
</organism>
<comment type="similarity">
    <text evidence="5">Belongs to the TRAFAC class myosin-kinesin ATPase superfamily. Kinesin family. KIN-14 subfamily.</text>
</comment>
<comment type="sequence caution" evidence="6">
    <conflict type="erroneous gene model prediction">
        <sequence resource="EMBL-CDS" id="ABA95279"/>
    </conflict>
</comment>
<comment type="sequence caution" evidence="6">
    <conflict type="erroneous gene model prediction">
        <sequence resource="EMBL-CDS" id="BAT15204"/>
    </conflict>
</comment>
<comment type="sequence caution" evidence="6">
    <conflict type="erroneous gene model prediction">
        <sequence resource="EMBL-CDS" id="EEE52506"/>
    </conflict>
</comment>
<gene>
    <name evidence="6" type="primary">KIN14P</name>
    <name evidence="8" type="ordered locus">Os11g0672400</name>
    <name evidence="7" type="ordered locus">LOC_Os11g44880</name>
    <name evidence="9" type="ORF">OsJ_34709</name>
</gene>
<accession>B9G8P1</accession>
<accession>A0A0P0Y574</accession>
<accession>Q2QZT7</accession>
<dbReference type="EMBL" id="DP000010">
    <property type="protein sequence ID" value="ABA95279.2"/>
    <property type="status" value="ALT_SEQ"/>
    <property type="molecule type" value="Genomic_DNA"/>
</dbReference>
<dbReference type="EMBL" id="AP014967">
    <property type="protein sequence ID" value="BAT15204.1"/>
    <property type="status" value="ALT_SEQ"/>
    <property type="molecule type" value="Genomic_DNA"/>
</dbReference>
<dbReference type="EMBL" id="CM000148">
    <property type="protein sequence ID" value="EEE52506.1"/>
    <property type="status" value="ALT_SEQ"/>
    <property type="molecule type" value="Genomic_DNA"/>
</dbReference>
<dbReference type="SMR" id="B9G8P1"/>
<dbReference type="FunCoup" id="B9G8P1">
    <property type="interactions" value="5"/>
</dbReference>
<dbReference type="STRING" id="39947.B9G8P1"/>
<dbReference type="PaxDb" id="39947-B9G8P1"/>
<dbReference type="eggNOG" id="KOG0239">
    <property type="taxonomic scope" value="Eukaryota"/>
</dbReference>
<dbReference type="InParanoid" id="B9G8P1"/>
<dbReference type="Proteomes" id="UP000007752">
    <property type="component" value="Chromosome 11"/>
</dbReference>
<dbReference type="Proteomes" id="UP000059680">
    <property type="component" value="Chromosome 11"/>
</dbReference>
<dbReference type="GO" id="GO:0005874">
    <property type="term" value="C:microtubule"/>
    <property type="evidence" value="ECO:0007669"/>
    <property type="project" value="UniProtKB-KW"/>
</dbReference>
<dbReference type="GO" id="GO:0015630">
    <property type="term" value="C:microtubule cytoskeleton"/>
    <property type="evidence" value="ECO:0000318"/>
    <property type="project" value="GO_Central"/>
</dbReference>
<dbReference type="GO" id="GO:0005524">
    <property type="term" value="F:ATP binding"/>
    <property type="evidence" value="ECO:0007669"/>
    <property type="project" value="UniProtKB-KW"/>
</dbReference>
<dbReference type="GO" id="GO:0008017">
    <property type="term" value="F:microtubule binding"/>
    <property type="evidence" value="ECO:0000318"/>
    <property type="project" value="GO_Central"/>
</dbReference>
<dbReference type="GO" id="GO:0003777">
    <property type="term" value="F:microtubule motor activity"/>
    <property type="evidence" value="ECO:0007669"/>
    <property type="project" value="InterPro"/>
</dbReference>
<dbReference type="GO" id="GO:0007018">
    <property type="term" value="P:microtubule-based movement"/>
    <property type="evidence" value="ECO:0007669"/>
    <property type="project" value="InterPro"/>
</dbReference>
<dbReference type="GO" id="GO:0007017">
    <property type="term" value="P:microtubule-based process"/>
    <property type="evidence" value="ECO:0000318"/>
    <property type="project" value="GO_Central"/>
</dbReference>
<dbReference type="CDD" id="cd21203">
    <property type="entry name" value="CH_AtKIN14-like"/>
    <property type="match status" value="1"/>
</dbReference>
<dbReference type="CDD" id="cd01366">
    <property type="entry name" value="KISc_C_terminal"/>
    <property type="match status" value="1"/>
</dbReference>
<dbReference type="FunFam" id="3.40.850.10:FF:000178">
    <property type="entry name" value="Kinesin-related protein3"/>
    <property type="match status" value="1"/>
</dbReference>
<dbReference type="FunFam" id="3.40.850.10:FF:000111">
    <property type="entry name" value="p-loop nucleoside triphosphate hydrolase superfamily protein with CH (Calponin Homology) domain"/>
    <property type="match status" value="1"/>
</dbReference>
<dbReference type="Gene3D" id="1.10.418.10">
    <property type="entry name" value="Calponin-like domain"/>
    <property type="match status" value="1"/>
</dbReference>
<dbReference type="Gene3D" id="3.40.850.10">
    <property type="entry name" value="Kinesin motor domain"/>
    <property type="match status" value="1"/>
</dbReference>
<dbReference type="InterPro" id="IPR001715">
    <property type="entry name" value="CH_dom"/>
</dbReference>
<dbReference type="InterPro" id="IPR036872">
    <property type="entry name" value="CH_dom_sf"/>
</dbReference>
<dbReference type="InterPro" id="IPR027640">
    <property type="entry name" value="Kinesin-like_fam"/>
</dbReference>
<dbReference type="InterPro" id="IPR001752">
    <property type="entry name" value="Kinesin_motor_dom"/>
</dbReference>
<dbReference type="InterPro" id="IPR036961">
    <property type="entry name" value="Kinesin_motor_dom_sf"/>
</dbReference>
<dbReference type="InterPro" id="IPR027417">
    <property type="entry name" value="P-loop_NTPase"/>
</dbReference>
<dbReference type="PANTHER" id="PTHR47972:SF41">
    <property type="entry name" value="KINESIN-LIKE PROTEIN KIN-14P"/>
    <property type="match status" value="1"/>
</dbReference>
<dbReference type="PANTHER" id="PTHR47972">
    <property type="entry name" value="KINESIN-LIKE PROTEIN KLP-3"/>
    <property type="match status" value="1"/>
</dbReference>
<dbReference type="Pfam" id="PF00307">
    <property type="entry name" value="CH"/>
    <property type="match status" value="1"/>
</dbReference>
<dbReference type="Pfam" id="PF00225">
    <property type="entry name" value="Kinesin"/>
    <property type="match status" value="1"/>
</dbReference>
<dbReference type="PRINTS" id="PR00380">
    <property type="entry name" value="KINESINHEAVY"/>
</dbReference>
<dbReference type="SMART" id="SM00033">
    <property type="entry name" value="CH"/>
    <property type="match status" value="1"/>
</dbReference>
<dbReference type="SMART" id="SM00129">
    <property type="entry name" value="KISc"/>
    <property type="match status" value="1"/>
</dbReference>
<dbReference type="SUPFAM" id="SSF47576">
    <property type="entry name" value="Calponin-homology domain, CH-domain"/>
    <property type="match status" value="1"/>
</dbReference>
<dbReference type="SUPFAM" id="SSF52540">
    <property type="entry name" value="P-loop containing nucleoside triphosphate hydrolases"/>
    <property type="match status" value="1"/>
</dbReference>
<dbReference type="PROSITE" id="PS50021">
    <property type="entry name" value="CH"/>
    <property type="match status" value="1"/>
</dbReference>
<dbReference type="PROSITE" id="PS50067">
    <property type="entry name" value="KINESIN_MOTOR_2"/>
    <property type="match status" value="1"/>
</dbReference>
<name>KN14P_ORYSJ</name>
<keyword id="KW-0067">ATP-binding</keyword>
<keyword id="KW-0175">Coiled coil</keyword>
<keyword id="KW-0493">Microtubule</keyword>
<keyword id="KW-0505">Motor protein</keyword>
<keyword id="KW-0547">Nucleotide-binding</keyword>
<keyword id="KW-1185">Reference proteome</keyword>
<sequence>MGSPEGEEAVVATAAVVEDGLRGNGDGGGGGVGEVVGVGRSIDMEWRKAEEAAIRRYEAANWLRRVVGVVCGKDLAEEPSEEEFRLGLRNGIVLCNALNKVQPGSVPKVVEAPSDSADGAALCAYQYFENVRNFLMGLQDLGLPTFEASDLEKGGKGVRVVDCVLSLRSFSESKQVGRSAPLKYGGILKPSMSGKHFIRKNSEPFVKTMVRSYSAELLRDGVSLEQSLGLDFSLEHVERTTPDSIRMLVQTMLSDKKPEEIPSLVESLLSRVIHEFERRTANQNESVKHALDPNDDKLLSRADTPPEMESTCTCSTGNMDEEDHTSVSMKEEVSTAVLVNGENVVEHIQAKQTDKYFDQQQKHIKDLKSNLATMKSGMEHIKLQYSEDLDKLGKHVHTLSHAASGYHKVLEENRKLYNQIQDLRGNIRVYCRVRPFLPGKVSSSSSVAGLEDRTITVMTPSKHGKDARKSFTFNRVFGPLATQEQVFADMQPLIRSVLDGYNVCIFAYGQTGSGKTFTMSGPKVLTEEGLGVNYRALNDLFNIQAQRKDTFCYEISVQMIEIYNEQVRDLLQNETVDIKNSSQKGIAVPDANIVPVTSTSDVIDLMNLGQKNRAVCSTAMNDRSSRSHSCLTVHVQGRDLTSRTVLRGCMHLVDLAGSERVDKSEVVGDRLKEAQHINKSLAALGDVIASLAQKNAHVPYRNSKLTQLLQDSLGGQAKTLMFVHIAPEPDAIGESISTLKFAERVATVELGAAKSNKEGGEVKELKEQIACLKAALAKKDGETESIRSTQSSPDIYRMRMGSAPPAFRNPMEEVGNLETRSNGTPRQKKRNFELPDVENDTSSWLDTSSQKEAALGEWVNNSQFGSSNSLLELGPDATQDVVFYQRNSPEPQWSWAGSVATEDSDDFEVTTSCSSEQDMVRPTSAPKAPGSANGSASIARKAQPKGAKSTDIRSTNPAKRAAPLQKKINGPPSASTKNGKQLSLSAADGKRAPNGKVSAKK</sequence>
<protein>
    <recommendedName>
        <fullName evidence="6">Kinesin-like protein KIN-14P</fullName>
    </recommendedName>
</protein>
<feature type="chain" id="PRO_0000438641" description="Kinesin-like protein KIN-14P">
    <location>
        <begin position="1"/>
        <end position="1001"/>
    </location>
</feature>
<feature type="domain" description="Calponin-homology (CH)" evidence="2">
    <location>
        <begin position="53"/>
        <end position="172"/>
    </location>
</feature>
<feature type="domain" description="Kinesin motor" evidence="3">
    <location>
        <begin position="426"/>
        <end position="748"/>
    </location>
</feature>
<feature type="region of interest" description="Disordered" evidence="4">
    <location>
        <begin position="284"/>
        <end position="322"/>
    </location>
</feature>
<feature type="region of interest" description="Disordered" evidence="4">
    <location>
        <begin position="804"/>
        <end position="830"/>
    </location>
</feature>
<feature type="region of interest" description="Disordered" evidence="4">
    <location>
        <begin position="890"/>
        <end position="1001"/>
    </location>
</feature>
<feature type="coiled-coil region" evidence="1">
    <location>
        <begin position="756"/>
        <end position="784"/>
    </location>
</feature>
<feature type="compositionally biased region" description="Basic and acidic residues" evidence="4">
    <location>
        <begin position="284"/>
        <end position="300"/>
    </location>
</feature>
<feature type="compositionally biased region" description="Polar residues" evidence="4">
    <location>
        <begin position="972"/>
        <end position="984"/>
    </location>
</feature>
<feature type="binding site" evidence="3">
    <location>
        <begin position="509"/>
        <end position="516"/>
    </location>
    <ligand>
        <name>ATP</name>
        <dbReference type="ChEBI" id="CHEBI:30616"/>
    </ligand>
</feature>
<evidence type="ECO:0000255" key="1"/>
<evidence type="ECO:0000255" key="2">
    <source>
        <dbReference type="PROSITE-ProRule" id="PRU00044"/>
    </source>
</evidence>
<evidence type="ECO:0000255" key="3">
    <source>
        <dbReference type="PROSITE-ProRule" id="PRU00283"/>
    </source>
</evidence>
<evidence type="ECO:0000256" key="4">
    <source>
        <dbReference type="SAM" id="MobiDB-lite"/>
    </source>
</evidence>
<evidence type="ECO:0000303" key="5">
    <source>
    </source>
</evidence>
<evidence type="ECO:0000305" key="6"/>
<evidence type="ECO:0000312" key="7">
    <source>
        <dbReference type="EMBL" id="ABA95279.2"/>
    </source>
</evidence>
<evidence type="ECO:0000312" key="8">
    <source>
        <dbReference type="EMBL" id="BAT15204.1"/>
    </source>
</evidence>
<evidence type="ECO:0000312" key="9">
    <source>
        <dbReference type="EMBL" id="EEE52506.1"/>
    </source>
</evidence>
<proteinExistence type="inferred from homology"/>
<reference key="1">
    <citation type="journal article" date="2005" name="BMC Biol.">
        <title>The sequence of rice chromosomes 11 and 12, rich in disease resistance genes and recent gene duplications.</title>
        <authorList>
            <consortium name="The rice chromosomes 11 and 12 sequencing consortia"/>
        </authorList>
    </citation>
    <scope>NUCLEOTIDE SEQUENCE [LARGE SCALE GENOMIC DNA]</scope>
    <source>
        <strain>cv. Nipponbare</strain>
    </source>
</reference>
<reference key="2">
    <citation type="journal article" date="2005" name="Nature">
        <title>The map-based sequence of the rice genome.</title>
        <authorList>
            <consortium name="International rice genome sequencing project (IRGSP)"/>
        </authorList>
    </citation>
    <scope>NUCLEOTIDE SEQUENCE [LARGE SCALE GENOMIC DNA]</scope>
    <source>
        <strain>cv. Nipponbare</strain>
    </source>
</reference>
<reference key="3">
    <citation type="journal article" date="2013" name="Rice">
        <title>Improvement of the Oryza sativa Nipponbare reference genome using next generation sequence and optical map data.</title>
        <authorList>
            <person name="Kawahara Y."/>
            <person name="de la Bastide M."/>
            <person name="Hamilton J.P."/>
            <person name="Kanamori H."/>
            <person name="McCombie W.R."/>
            <person name="Ouyang S."/>
            <person name="Schwartz D.C."/>
            <person name="Tanaka T."/>
            <person name="Wu J."/>
            <person name="Zhou S."/>
            <person name="Childs K.L."/>
            <person name="Davidson R.M."/>
            <person name="Lin H."/>
            <person name="Quesada-Ocampo L."/>
            <person name="Vaillancourt B."/>
            <person name="Sakai H."/>
            <person name="Lee S.S."/>
            <person name="Kim J."/>
            <person name="Numa H."/>
            <person name="Itoh T."/>
            <person name="Buell C.R."/>
            <person name="Matsumoto T."/>
        </authorList>
    </citation>
    <scope>GENOME REANNOTATION</scope>
    <source>
        <strain>cv. Nipponbare</strain>
    </source>
</reference>
<reference key="4">
    <citation type="journal article" date="2005" name="PLoS Biol.">
        <title>The genomes of Oryza sativa: a history of duplications.</title>
        <authorList>
            <person name="Yu J."/>
            <person name="Wang J."/>
            <person name="Lin W."/>
            <person name="Li S."/>
            <person name="Li H."/>
            <person name="Zhou J."/>
            <person name="Ni P."/>
            <person name="Dong W."/>
            <person name="Hu S."/>
            <person name="Zeng C."/>
            <person name="Zhang J."/>
            <person name="Zhang Y."/>
            <person name="Li R."/>
            <person name="Xu Z."/>
            <person name="Li S."/>
            <person name="Li X."/>
            <person name="Zheng H."/>
            <person name="Cong L."/>
            <person name="Lin L."/>
            <person name="Yin J."/>
            <person name="Geng J."/>
            <person name="Li G."/>
            <person name="Shi J."/>
            <person name="Liu J."/>
            <person name="Lv H."/>
            <person name="Li J."/>
            <person name="Wang J."/>
            <person name="Deng Y."/>
            <person name="Ran L."/>
            <person name="Shi X."/>
            <person name="Wang X."/>
            <person name="Wu Q."/>
            <person name="Li C."/>
            <person name="Ren X."/>
            <person name="Wang J."/>
            <person name="Wang X."/>
            <person name="Li D."/>
            <person name="Liu D."/>
            <person name="Zhang X."/>
            <person name="Ji Z."/>
            <person name="Zhao W."/>
            <person name="Sun Y."/>
            <person name="Zhang Z."/>
            <person name="Bao J."/>
            <person name="Han Y."/>
            <person name="Dong L."/>
            <person name="Ji J."/>
            <person name="Chen P."/>
            <person name="Wu S."/>
            <person name="Liu J."/>
            <person name="Xiao Y."/>
            <person name="Bu D."/>
            <person name="Tan J."/>
            <person name="Yang L."/>
            <person name="Ye C."/>
            <person name="Zhang J."/>
            <person name="Xu J."/>
            <person name="Zhou Y."/>
            <person name="Yu Y."/>
            <person name="Zhang B."/>
            <person name="Zhuang S."/>
            <person name="Wei H."/>
            <person name="Liu B."/>
            <person name="Lei M."/>
            <person name="Yu H."/>
            <person name="Li Y."/>
            <person name="Xu H."/>
            <person name="Wei S."/>
            <person name="He X."/>
            <person name="Fang L."/>
            <person name="Zhang Z."/>
            <person name="Zhang Y."/>
            <person name="Huang X."/>
            <person name="Su Z."/>
            <person name="Tong W."/>
            <person name="Li J."/>
            <person name="Tong Z."/>
            <person name="Li S."/>
            <person name="Ye J."/>
            <person name="Wang L."/>
            <person name="Fang L."/>
            <person name="Lei T."/>
            <person name="Chen C.-S."/>
            <person name="Chen H.-C."/>
            <person name="Xu Z."/>
            <person name="Li H."/>
            <person name="Huang H."/>
            <person name="Zhang F."/>
            <person name="Xu H."/>
            <person name="Li N."/>
            <person name="Zhao C."/>
            <person name="Li S."/>
            <person name="Dong L."/>
            <person name="Huang Y."/>
            <person name="Li L."/>
            <person name="Xi Y."/>
            <person name="Qi Q."/>
            <person name="Li W."/>
            <person name="Zhang B."/>
            <person name="Hu W."/>
            <person name="Zhang Y."/>
            <person name="Tian X."/>
            <person name="Jiao Y."/>
            <person name="Liang X."/>
            <person name="Jin J."/>
            <person name="Gao L."/>
            <person name="Zheng W."/>
            <person name="Hao B."/>
            <person name="Liu S.-M."/>
            <person name="Wang W."/>
            <person name="Yuan L."/>
            <person name="Cao M."/>
            <person name="McDermott J."/>
            <person name="Samudrala R."/>
            <person name="Wang J."/>
            <person name="Wong G.K.-S."/>
            <person name="Yang H."/>
        </authorList>
    </citation>
    <scope>NUCLEOTIDE SEQUENCE [LARGE SCALE GENOMIC DNA]</scope>
    <source>
        <strain>cv. Nipponbare</strain>
    </source>
</reference>
<reference key="5">
    <citation type="journal article" date="2009" name="Ann. Bot.">
        <title>Evaluating the microtubule cytoskeleton and its interacting proteins in monocots by mining the rice genome.</title>
        <authorList>
            <person name="Guo L."/>
            <person name="Ho C.M."/>
            <person name="Kong Z."/>
            <person name="Lee Y.R."/>
            <person name="Qian Q."/>
            <person name="Liu B."/>
        </authorList>
    </citation>
    <scope>GENE FAMILY</scope>
    <scope>NOMENCLATURE</scope>
</reference>